<feature type="chain" id="PRO_0000367658" description="Glutamate--tRNA ligase 2">
    <location>
        <begin position="1"/>
        <end position="465"/>
    </location>
</feature>
<feature type="short sequence motif" description="'HIGH' region" evidence="1">
    <location>
        <begin position="8"/>
        <end position="18"/>
    </location>
</feature>
<feature type="short sequence motif" description="'KMSKS' region" evidence="1">
    <location>
        <begin position="249"/>
        <end position="253"/>
    </location>
</feature>
<feature type="binding site" evidence="1">
    <location>
        <position position="252"/>
    </location>
    <ligand>
        <name>ATP</name>
        <dbReference type="ChEBI" id="CHEBI:30616"/>
    </ligand>
</feature>
<reference key="1">
    <citation type="journal article" date="2009" name="Infect. Immun.">
        <title>Comparative genomics reveal extensive transposon-mediated genomic plasticity and diversity among potential effector proteins within the genus Coxiella.</title>
        <authorList>
            <person name="Beare P.A."/>
            <person name="Unsworth N."/>
            <person name="Andoh M."/>
            <person name="Voth D.E."/>
            <person name="Omsland A."/>
            <person name="Gilk S.D."/>
            <person name="Williams K.P."/>
            <person name="Sobral B.W."/>
            <person name="Kupko J.J. III"/>
            <person name="Porcella S.F."/>
            <person name="Samuel J.E."/>
            <person name="Heinzen R.A."/>
        </authorList>
    </citation>
    <scope>NUCLEOTIDE SEQUENCE [LARGE SCALE GENOMIC DNA]</scope>
    <source>
        <strain>CbuK_Q154</strain>
    </source>
</reference>
<gene>
    <name evidence="1" type="primary">gltX2</name>
    <name type="ordered locus">CbuK_1719</name>
</gene>
<accession>B6J4I8</accession>
<keyword id="KW-0030">Aminoacyl-tRNA synthetase</keyword>
<keyword id="KW-0067">ATP-binding</keyword>
<keyword id="KW-0963">Cytoplasm</keyword>
<keyword id="KW-0436">Ligase</keyword>
<keyword id="KW-0547">Nucleotide-binding</keyword>
<keyword id="KW-0648">Protein biosynthesis</keyword>
<protein>
    <recommendedName>
        <fullName evidence="1">Glutamate--tRNA ligase 2</fullName>
        <ecNumber evidence="1">6.1.1.17</ecNumber>
    </recommendedName>
    <alternativeName>
        <fullName evidence="1">Glutamyl-tRNA synthetase 2</fullName>
        <shortName evidence="1">GluRS 2</shortName>
    </alternativeName>
</protein>
<sequence length="465" mass="52747">MMKSRFCPSPTGLMHLGNARTALFNYLFAKSKDGIFLLRIEDTDVERSKETFDLGLQEDLRWLNLEWQEGPGADEGNGPYHQSKRQAIYDDYYQRLEEADQAYPCFCSEEQLRLSRKIQRSAGKPPRYAGTCRSLSAAEIEKKKAEGLQPALRFRVPDDEVVVFADLVRGEQRFQTNDIGDFIIRRANGTSPFMFCNAIDDALMGVSHVLRGEDHLTNTPRQLLILQALELPVPTYAHIALIVGPDGSPLSKRHGSRGIKELRDNGYLPLALTNYLARLGHYYASDELLSLAELAKGFNVESLSKSPVKFNAQQLDYWQKQTVNQLPNDDFWEWAGSELQSQIPTDKADLFLTTVKPNVSFPRDVAYWVNVCFGKTLNLETAQSELLRATGNRYFEEAFEAFKKFGKDLNSVVSHLKEKLNLKGKPLYQPLRIALTGAEHGPELAKLILIMDYETIQNRLQEACQ</sequence>
<name>SYE2_COXB1</name>
<proteinExistence type="inferred from homology"/>
<comment type="function">
    <text evidence="1">Catalyzes the attachment of glutamate to tRNA(Glu) in a two-step reaction: glutamate is first activated by ATP to form Glu-AMP and then transferred to the acceptor end of tRNA(Glu).</text>
</comment>
<comment type="catalytic activity">
    <reaction evidence="1">
        <text>tRNA(Glu) + L-glutamate + ATP = L-glutamyl-tRNA(Glu) + AMP + diphosphate</text>
        <dbReference type="Rhea" id="RHEA:23540"/>
        <dbReference type="Rhea" id="RHEA-COMP:9663"/>
        <dbReference type="Rhea" id="RHEA-COMP:9680"/>
        <dbReference type="ChEBI" id="CHEBI:29985"/>
        <dbReference type="ChEBI" id="CHEBI:30616"/>
        <dbReference type="ChEBI" id="CHEBI:33019"/>
        <dbReference type="ChEBI" id="CHEBI:78442"/>
        <dbReference type="ChEBI" id="CHEBI:78520"/>
        <dbReference type="ChEBI" id="CHEBI:456215"/>
        <dbReference type="EC" id="6.1.1.17"/>
    </reaction>
</comment>
<comment type="subunit">
    <text evidence="1">Monomer.</text>
</comment>
<comment type="subcellular location">
    <subcellularLocation>
        <location evidence="1">Cytoplasm</location>
    </subcellularLocation>
</comment>
<comment type="similarity">
    <text evidence="1">Belongs to the class-I aminoacyl-tRNA synthetase family. Glutamate--tRNA ligase type 1 subfamily.</text>
</comment>
<evidence type="ECO:0000255" key="1">
    <source>
        <dbReference type="HAMAP-Rule" id="MF_00022"/>
    </source>
</evidence>
<dbReference type="EC" id="6.1.1.17" evidence="1"/>
<dbReference type="EMBL" id="CP001020">
    <property type="protein sequence ID" value="ACJ20853.1"/>
    <property type="molecule type" value="Genomic_DNA"/>
</dbReference>
<dbReference type="RefSeq" id="WP_005772021.1">
    <property type="nucleotide sequence ID" value="NC_011528.1"/>
</dbReference>
<dbReference type="SMR" id="B6J4I8"/>
<dbReference type="KEGG" id="cbc:CbuK_1719"/>
<dbReference type="HOGENOM" id="CLU_015768_6_3_6"/>
<dbReference type="GO" id="GO:0005829">
    <property type="term" value="C:cytosol"/>
    <property type="evidence" value="ECO:0007669"/>
    <property type="project" value="TreeGrafter"/>
</dbReference>
<dbReference type="GO" id="GO:0005524">
    <property type="term" value="F:ATP binding"/>
    <property type="evidence" value="ECO:0007669"/>
    <property type="project" value="UniProtKB-UniRule"/>
</dbReference>
<dbReference type="GO" id="GO:0004818">
    <property type="term" value="F:glutamate-tRNA ligase activity"/>
    <property type="evidence" value="ECO:0007669"/>
    <property type="project" value="UniProtKB-UniRule"/>
</dbReference>
<dbReference type="GO" id="GO:0000049">
    <property type="term" value="F:tRNA binding"/>
    <property type="evidence" value="ECO:0007669"/>
    <property type="project" value="InterPro"/>
</dbReference>
<dbReference type="GO" id="GO:0008270">
    <property type="term" value="F:zinc ion binding"/>
    <property type="evidence" value="ECO:0007669"/>
    <property type="project" value="InterPro"/>
</dbReference>
<dbReference type="GO" id="GO:0006424">
    <property type="term" value="P:glutamyl-tRNA aminoacylation"/>
    <property type="evidence" value="ECO:0007669"/>
    <property type="project" value="UniProtKB-UniRule"/>
</dbReference>
<dbReference type="CDD" id="cd00808">
    <property type="entry name" value="GluRS_core"/>
    <property type="match status" value="1"/>
</dbReference>
<dbReference type="FunFam" id="3.40.50.620:FF:000007">
    <property type="entry name" value="Glutamate--tRNA ligase"/>
    <property type="match status" value="1"/>
</dbReference>
<dbReference type="Gene3D" id="1.10.10.350">
    <property type="match status" value="1"/>
</dbReference>
<dbReference type="Gene3D" id="3.40.50.620">
    <property type="entry name" value="HUPs"/>
    <property type="match status" value="1"/>
</dbReference>
<dbReference type="HAMAP" id="MF_00022">
    <property type="entry name" value="Glu_tRNA_synth_type1"/>
    <property type="match status" value="1"/>
</dbReference>
<dbReference type="InterPro" id="IPR045462">
    <property type="entry name" value="aa-tRNA-synth_I_cd-bd"/>
</dbReference>
<dbReference type="InterPro" id="IPR020751">
    <property type="entry name" value="aa-tRNA-synth_I_codon-bd_sub2"/>
</dbReference>
<dbReference type="InterPro" id="IPR001412">
    <property type="entry name" value="aa-tRNA-synth_I_CS"/>
</dbReference>
<dbReference type="InterPro" id="IPR008925">
    <property type="entry name" value="aa_tRNA-synth_I_cd-bd_sf"/>
</dbReference>
<dbReference type="InterPro" id="IPR004527">
    <property type="entry name" value="Glu-tRNA-ligase_bac/mito"/>
</dbReference>
<dbReference type="InterPro" id="IPR000924">
    <property type="entry name" value="Glu/Gln-tRNA-synth"/>
</dbReference>
<dbReference type="InterPro" id="IPR020058">
    <property type="entry name" value="Glu/Gln-tRNA-synth_Ib_cat-dom"/>
</dbReference>
<dbReference type="InterPro" id="IPR049940">
    <property type="entry name" value="GluQ/Sye"/>
</dbReference>
<dbReference type="InterPro" id="IPR033910">
    <property type="entry name" value="GluRS_core"/>
</dbReference>
<dbReference type="InterPro" id="IPR014729">
    <property type="entry name" value="Rossmann-like_a/b/a_fold"/>
</dbReference>
<dbReference type="NCBIfam" id="TIGR00464">
    <property type="entry name" value="gltX_bact"/>
    <property type="match status" value="1"/>
</dbReference>
<dbReference type="PANTHER" id="PTHR43311">
    <property type="entry name" value="GLUTAMATE--TRNA LIGASE"/>
    <property type="match status" value="1"/>
</dbReference>
<dbReference type="PANTHER" id="PTHR43311:SF2">
    <property type="entry name" value="GLUTAMATE--TRNA LIGASE, MITOCHONDRIAL-RELATED"/>
    <property type="match status" value="1"/>
</dbReference>
<dbReference type="Pfam" id="PF19269">
    <property type="entry name" value="Anticodon_2"/>
    <property type="match status" value="1"/>
</dbReference>
<dbReference type="Pfam" id="PF00749">
    <property type="entry name" value="tRNA-synt_1c"/>
    <property type="match status" value="1"/>
</dbReference>
<dbReference type="PRINTS" id="PR00987">
    <property type="entry name" value="TRNASYNTHGLU"/>
</dbReference>
<dbReference type="SUPFAM" id="SSF48163">
    <property type="entry name" value="An anticodon-binding domain of class I aminoacyl-tRNA synthetases"/>
    <property type="match status" value="1"/>
</dbReference>
<dbReference type="SUPFAM" id="SSF52374">
    <property type="entry name" value="Nucleotidylyl transferase"/>
    <property type="match status" value="1"/>
</dbReference>
<dbReference type="PROSITE" id="PS00178">
    <property type="entry name" value="AA_TRNA_LIGASE_I"/>
    <property type="match status" value="1"/>
</dbReference>
<organism>
    <name type="scientific">Coxiella burnetii (strain CbuK_Q154)</name>
    <name type="common">Coxiella burnetii (strain Q154)</name>
    <dbReference type="NCBI Taxonomy" id="434924"/>
    <lineage>
        <taxon>Bacteria</taxon>
        <taxon>Pseudomonadati</taxon>
        <taxon>Pseudomonadota</taxon>
        <taxon>Gammaproteobacteria</taxon>
        <taxon>Legionellales</taxon>
        <taxon>Coxiellaceae</taxon>
        <taxon>Coxiella</taxon>
    </lineage>
</organism>